<feature type="chain" id="PRO_1000214532" description="Large ribosomal subunit protein uL24">
    <location>
        <begin position="1"/>
        <end position="120"/>
    </location>
</feature>
<proteinExistence type="inferred from homology"/>
<keyword id="KW-0687">Ribonucleoprotein</keyword>
<keyword id="KW-0689">Ribosomal protein</keyword>
<keyword id="KW-0694">RNA-binding</keyword>
<keyword id="KW-0699">rRNA-binding</keyword>
<accession>B8HCZ5</accession>
<organism>
    <name type="scientific">Pseudarthrobacter chlorophenolicus (strain ATCC 700700 / DSM 12829 / CIP 107037 / JCM 12360 / KCTC 9906 / NCIMB 13794 / A6)</name>
    <name type="common">Arthrobacter chlorophenolicus</name>
    <dbReference type="NCBI Taxonomy" id="452863"/>
    <lineage>
        <taxon>Bacteria</taxon>
        <taxon>Bacillati</taxon>
        <taxon>Actinomycetota</taxon>
        <taxon>Actinomycetes</taxon>
        <taxon>Micrococcales</taxon>
        <taxon>Micrococcaceae</taxon>
        <taxon>Pseudarthrobacter</taxon>
    </lineage>
</organism>
<comment type="function">
    <text evidence="1">One of two assembly initiator proteins, it binds directly to the 5'-end of the 23S rRNA, where it nucleates assembly of the 50S subunit.</text>
</comment>
<comment type="function">
    <text evidence="1">One of the proteins that surrounds the polypeptide exit tunnel on the outside of the subunit.</text>
</comment>
<comment type="subunit">
    <text evidence="1">Part of the 50S ribosomal subunit.</text>
</comment>
<comment type="similarity">
    <text evidence="1">Belongs to the universal ribosomal protein uL24 family.</text>
</comment>
<name>RL24_PSECP</name>
<sequence>MAAKIKKGDLVQVITGAKAERGGDRGKQGKVLRVFTDTNRVLVEGINRVTKHTRVGQSQRGTKTGGIEVVEAPIHISNVALVDPSTKKPTRVGFRLDTVEKNGVKKTVRIRVSKSSGKDI</sequence>
<protein>
    <recommendedName>
        <fullName evidence="1">Large ribosomal subunit protein uL24</fullName>
    </recommendedName>
    <alternativeName>
        <fullName evidence="2">50S ribosomal protein L24</fullName>
    </alternativeName>
</protein>
<dbReference type="EMBL" id="CP001341">
    <property type="protein sequence ID" value="ACL40641.1"/>
    <property type="molecule type" value="Genomic_DNA"/>
</dbReference>
<dbReference type="RefSeq" id="WP_015937845.1">
    <property type="nucleotide sequence ID" value="NC_011886.1"/>
</dbReference>
<dbReference type="SMR" id="B8HCZ5"/>
<dbReference type="STRING" id="452863.Achl_2676"/>
<dbReference type="KEGG" id="ach:Achl_2676"/>
<dbReference type="eggNOG" id="COG0198">
    <property type="taxonomic scope" value="Bacteria"/>
</dbReference>
<dbReference type="HOGENOM" id="CLU_093315_2_0_11"/>
<dbReference type="OrthoDB" id="9807419at2"/>
<dbReference type="Proteomes" id="UP000002505">
    <property type="component" value="Chromosome"/>
</dbReference>
<dbReference type="GO" id="GO:1990904">
    <property type="term" value="C:ribonucleoprotein complex"/>
    <property type="evidence" value="ECO:0007669"/>
    <property type="project" value="UniProtKB-KW"/>
</dbReference>
<dbReference type="GO" id="GO:0005840">
    <property type="term" value="C:ribosome"/>
    <property type="evidence" value="ECO:0007669"/>
    <property type="project" value="UniProtKB-KW"/>
</dbReference>
<dbReference type="GO" id="GO:0019843">
    <property type="term" value="F:rRNA binding"/>
    <property type="evidence" value="ECO:0007669"/>
    <property type="project" value="UniProtKB-UniRule"/>
</dbReference>
<dbReference type="GO" id="GO:0003735">
    <property type="term" value="F:structural constituent of ribosome"/>
    <property type="evidence" value="ECO:0007669"/>
    <property type="project" value="InterPro"/>
</dbReference>
<dbReference type="GO" id="GO:0006412">
    <property type="term" value="P:translation"/>
    <property type="evidence" value="ECO:0007669"/>
    <property type="project" value="UniProtKB-UniRule"/>
</dbReference>
<dbReference type="CDD" id="cd06089">
    <property type="entry name" value="KOW_RPL26"/>
    <property type="match status" value="1"/>
</dbReference>
<dbReference type="Gene3D" id="2.30.30.30">
    <property type="match status" value="1"/>
</dbReference>
<dbReference type="HAMAP" id="MF_01326_B">
    <property type="entry name" value="Ribosomal_uL24_B"/>
    <property type="match status" value="1"/>
</dbReference>
<dbReference type="InterPro" id="IPR014722">
    <property type="entry name" value="Rib_uL2_dom2"/>
</dbReference>
<dbReference type="InterPro" id="IPR003256">
    <property type="entry name" value="Ribosomal_uL24"/>
</dbReference>
<dbReference type="InterPro" id="IPR041988">
    <property type="entry name" value="Ribosomal_uL24_KOW"/>
</dbReference>
<dbReference type="InterPro" id="IPR008991">
    <property type="entry name" value="Translation_prot_SH3-like_sf"/>
</dbReference>
<dbReference type="NCBIfam" id="TIGR01079">
    <property type="entry name" value="rplX_bact"/>
    <property type="match status" value="1"/>
</dbReference>
<dbReference type="PANTHER" id="PTHR12903">
    <property type="entry name" value="MITOCHONDRIAL RIBOSOMAL PROTEIN L24"/>
    <property type="match status" value="1"/>
</dbReference>
<dbReference type="Pfam" id="PF17136">
    <property type="entry name" value="ribosomal_L24"/>
    <property type="match status" value="1"/>
</dbReference>
<dbReference type="SUPFAM" id="SSF50104">
    <property type="entry name" value="Translation proteins SH3-like domain"/>
    <property type="match status" value="1"/>
</dbReference>
<gene>
    <name evidence="1" type="primary">rplX</name>
    <name type="ordered locus">Achl_2676</name>
</gene>
<evidence type="ECO:0000255" key="1">
    <source>
        <dbReference type="HAMAP-Rule" id="MF_01326"/>
    </source>
</evidence>
<evidence type="ECO:0000305" key="2"/>
<reference key="1">
    <citation type="submission" date="2009-01" db="EMBL/GenBank/DDBJ databases">
        <title>Complete sequence of chromosome of Arthrobacter chlorophenolicus A6.</title>
        <authorList>
            <consortium name="US DOE Joint Genome Institute"/>
            <person name="Lucas S."/>
            <person name="Copeland A."/>
            <person name="Lapidus A."/>
            <person name="Glavina del Rio T."/>
            <person name="Tice H."/>
            <person name="Bruce D."/>
            <person name="Goodwin L."/>
            <person name="Pitluck S."/>
            <person name="Goltsman E."/>
            <person name="Clum A."/>
            <person name="Larimer F."/>
            <person name="Land M."/>
            <person name="Hauser L."/>
            <person name="Kyrpides N."/>
            <person name="Mikhailova N."/>
            <person name="Jansson J."/>
            <person name="Richardson P."/>
        </authorList>
    </citation>
    <scope>NUCLEOTIDE SEQUENCE [LARGE SCALE GENOMIC DNA]</scope>
    <source>
        <strain>ATCC 700700 / DSM 12829 / CIP 107037 / JCM 12360 / KCTC 9906 / NCIMB 13794 / A6</strain>
    </source>
</reference>